<reference key="1">
    <citation type="journal article" date="2005" name="DNA Res.">
        <title>Complete genome sequence of the facultative anaerobic magnetotactic bacterium Magnetospirillum sp. strain AMB-1.</title>
        <authorList>
            <person name="Matsunaga T."/>
            <person name="Okamura Y."/>
            <person name="Fukuda Y."/>
            <person name="Wahyudi A.T."/>
            <person name="Murase Y."/>
            <person name="Takeyama H."/>
        </authorList>
    </citation>
    <scope>NUCLEOTIDE SEQUENCE [LARGE SCALE GENOMIC DNA]</scope>
    <source>
        <strain>ATCC 700264 / AMB-1</strain>
    </source>
</reference>
<sequence>MKKVGVIGGGAWGTALALTARRAGRDVVLWAREPQVVDDINVRHVNSDFLPGIDLDPALRATVDLADAADADAVLLVSPAQHLRAAARALAPHWRAGVPAVICSKGIELSTCALMQDAIAAELPQAPIAVLSGPTFAIEVARGLPTAITLACAAPELGRKLVEALGTASFRPYLSDDLVGAQIGGAVKNVLAIACGIVEGRGLGDNARAALITRGLAEMTRLAMAKGGRPETLMGLSGLGDLILTASSTQSRNYSWASPWARAAPWPTSWASAIR</sequence>
<protein>
    <recommendedName>
        <fullName evidence="1">Glycerol-3-phosphate dehydrogenase [NAD(P)+]</fullName>
        <ecNumber evidence="1">1.1.1.94</ecNumber>
    </recommendedName>
    <alternativeName>
        <fullName evidence="1">NAD(P)(+)-dependent glycerol-3-phosphate dehydrogenase</fullName>
    </alternativeName>
    <alternativeName>
        <fullName evidence="1">NAD(P)H-dependent dihydroxyacetone-phosphate reductase</fullName>
    </alternativeName>
</protein>
<organism>
    <name type="scientific">Paramagnetospirillum magneticum (strain ATCC 700264 / AMB-1)</name>
    <name type="common">Magnetospirillum magneticum</name>
    <dbReference type="NCBI Taxonomy" id="342108"/>
    <lineage>
        <taxon>Bacteria</taxon>
        <taxon>Pseudomonadati</taxon>
        <taxon>Pseudomonadota</taxon>
        <taxon>Alphaproteobacteria</taxon>
        <taxon>Rhodospirillales</taxon>
        <taxon>Magnetospirillaceae</taxon>
        <taxon>Paramagnetospirillum</taxon>
    </lineage>
</organism>
<feature type="chain" id="PRO_0000255329" description="Glycerol-3-phosphate dehydrogenase [NAD(P)+]">
    <location>
        <begin position="1"/>
        <end position="275"/>
    </location>
</feature>
<feature type="active site" description="Proton acceptor" evidence="1">
    <location>
        <position position="188"/>
    </location>
</feature>
<feature type="binding site" evidence="1">
    <location>
        <position position="12"/>
    </location>
    <ligand>
        <name>NADPH</name>
        <dbReference type="ChEBI" id="CHEBI:57783"/>
    </ligand>
</feature>
<feature type="binding site" evidence="1">
    <location>
        <position position="32"/>
    </location>
    <ligand>
        <name>NADPH</name>
        <dbReference type="ChEBI" id="CHEBI:57783"/>
    </ligand>
</feature>
<feature type="binding site" evidence="1">
    <location>
        <position position="105"/>
    </location>
    <ligand>
        <name>NADPH</name>
        <dbReference type="ChEBI" id="CHEBI:57783"/>
    </ligand>
</feature>
<feature type="binding site" evidence="1">
    <location>
        <position position="105"/>
    </location>
    <ligand>
        <name>sn-glycerol 3-phosphate</name>
        <dbReference type="ChEBI" id="CHEBI:57597"/>
    </ligand>
</feature>
<feature type="binding site" evidence="1">
    <location>
        <position position="133"/>
    </location>
    <ligand>
        <name>sn-glycerol 3-phosphate</name>
        <dbReference type="ChEBI" id="CHEBI:57597"/>
    </ligand>
</feature>
<feature type="binding site" evidence="1">
    <location>
        <position position="135"/>
    </location>
    <ligand>
        <name>sn-glycerol 3-phosphate</name>
        <dbReference type="ChEBI" id="CHEBI:57597"/>
    </ligand>
</feature>
<feature type="binding site" evidence="1">
    <location>
        <position position="137"/>
    </location>
    <ligand>
        <name>NADPH</name>
        <dbReference type="ChEBI" id="CHEBI:57783"/>
    </ligand>
</feature>
<feature type="binding site" evidence="1">
    <location>
        <position position="188"/>
    </location>
    <ligand>
        <name>sn-glycerol 3-phosphate</name>
        <dbReference type="ChEBI" id="CHEBI:57597"/>
    </ligand>
</feature>
<feature type="binding site" evidence="1">
    <location>
        <position position="241"/>
    </location>
    <ligand>
        <name>sn-glycerol 3-phosphate</name>
        <dbReference type="ChEBI" id="CHEBI:57597"/>
    </ligand>
</feature>
<feature type="binding site" evidence="1">
    <location>
        <position position="251"/>
    </location>
    <ligand>
        <name>sn-glycerol 3-phosphate</name>
        <dbReference type="ChEBI" id="CHEBI:57597"/>
    </ligand>
</feature>
<feature type="binding site" evidence="1">
    <location>
        <position position="252"/>
    </location>
    <ligand>
        <name>NADPH</name>
        <dbReference type="ChEBI" id="CHEBI:57783"/>
    </ligand>
</feature>
<feature type="binding site" evidence="1">
    <location>
        <position position="252"/>
    </location>
    <ligand>
        <name>sn-glycerol 3-phosphate</name>
        <dbReference type="ChEBI" id="CHEBI:57597"/>
    </ligand>
</feature>
<feature type="binding site" evidence="1">
    <location>
        <position position="253"/>
    </location>
    <ligand>
        <name>sn-glycerol 3-phosphate</name>
        <dbReference type="ChEBI" id="CHEBI:57597"/>
    </ligand>
</feature>
<evidence type="ECO:0000255" key="1">
    <source>
        <dbReference type="HAMAP-Rule" id="MF_00394"/>
    </source>
</evidence>
<proteinExistence type="inferred from homology"/>
<comment type="function">
    <text evidence="1">Catalyzes the reduction of the glycolytic intermediate dihydroxyacetone phosphate (DHAP) to sn-glycerol 3-phosphate (G3P), the key precursor for phospholipid synthesis.</text>
</comment>
<comment type="catalytic activity">
    <reaction evidence="1">
        <text>sn-glycerol 3-phosphate + NAD(+) = dihydroxyacetone phosphate + NADH + H(+)</text>
        <dbReference type="Rhea" id="RHEA:11092"/>
        <dbReference type="ChEBI" id="CHEBI:15378"/>
        <dbReference type="ChEBI" id="CHEBI:57540"/>
        <dbReference type="ChEBI" id="CHEBI:57597"/>
        <dbReference type="ChEBI" id="CHEBI:57642"/>
        <dbReference type="ChEBI" id="CHEBI:57945"/>
        <dbReference type="EC" id="1.1.1.94"/>
    </reaction>
    <physiologicalReaction direction="right-to-left" evidence="1">
        <dbReference type="Rhea" id="RHEA:11094"/>
    </physiologicalReaction>
</comment>
<comment type="catalytic activity">
    <reaction evidence="1">
        <text>sn-glycerol 3-phosphate + NADP(+) = dihydroxyacetone phosphate + NADPH + H(+)</text>
        <dbReference type="Rhea" id="RHEA:11096"/>
        <dbReference type="ChEBI" id="CHEBI:15378"/>
        <dbReference type="ChEBI" id="CHEBI:57597"/>
        <dbReference type="ChEBI" id="CHEBI:57642"/>
        <dbReference type="ChEBI" id="CHEBI:57783"/>
        <dbReference type="ChEBI" id="CHEBI:58349"/>
        <dbReference type="EC" id="1.1.1.94"/>
    </reaction>
    <physiologicalReaction direction="right-to-left" evidence="1">
        <dbReference type="Rhea" id="RHEA:11098"/>
    </physiologicalReaction>
</comment>
<comment type="pathway">
    <text evidence="1">Membrane lipid metabolism; glycerophospholipid metabolism.</text>
</comment>
<comment type="subcellular location">
    <subcellularLocation>
        <location evidence="1">Cytoplasm</location>
    </subcellularLocation>
</comment>
<comment type="similarity">
    <text evidence="1">Belongs to the NAD-dependent glycerol-3-phosphate dehydrogenase family.</text>
</comment>
<accession>Q2W015</accession>
<dbReference type="EC" id="1.1.1.94" evidence="1"/>
<dbReference type="EMBL" id="AP007255">
    <property type="protein sequence ID" value="BAE52810.1"/>
    <property type="molecule type" value="Genomic_DNA"/>
</dbReference>
<dbReference type="SMR" id="Q2W015"/>
<dbReference type="STRING" id="342108.amb4006"/>
<dbReference type="KEGG" id="mag:amb4006"/>
<dbReference type="HOGENOM" id="CLU_033449_0_2_5"/>
<dbReference type="UniPathway" id="UPA00940"/>
<dbReference type="Proteomes" id="UP000007058">
    <property type="component" value="Chromosome"/>
</dbReference>
<dbReference type="GO" id="GO:0005829">
    <property type="term" value="C:cytosol"/>
    <property type="evidence" value="ECO:0007669"/>
    <property type="project" value="TreeGrafter"/>
</dbReference>
<dbReference type="GO" id="GO:0047952">
    <property type="term" value="F:glycerol-3-phosphate dehydrogenase [NAD(P)+] activity"/>
    <property type="evidence" value="ECO:0007669"/>
    <property type="project" value="UniProtKB-UniRule"/>
</dbReference>
<dbReference type="GO" id="GO:0051287">
    <property type="term" value="F:NAD binding"/>
    <property type="evidence" value="ECO:0007669"/>
    <property type="project" value="InterPro"/>
</dbReference>
<dbReference type="GO" id="GO:0005975">
    <property type="term" value="P:carbohydrate metabolic process"/>
    <property type="evidence" value="ECO:0007669"/>
    <property type="project" value="InterPro"/>
</dbReference>
<dbReference type="GO" id="GO:0046167">
    <property type="term" value="P:glycerol-3-phosphate biosynthetic process"/>
    <property type="evidence" value="ECO:0007669"/>
    <property type="project" value="UniProtKB-UniRule"/>
</dbReference>
<dbReference type="GO" id="GO:0046168">
    <property type="term" value="P:glycerol-3-phosphate catabolic process"/>
    <property type="evidence" value="ECO:0007669"/>
    <property type="project" value="InterPro"/>
</dbReference>
<dbReference type="GO" id="GO:0006650">
    <property type="term" value="P:glycerophospholipid metabolic process"/>
    <property type="evidence" value="ECO:0007669"/>
    <property type="project" value="UniProtKB-UniRule"/>
</dbReference>
<dbReference type="GO" id="GO:0008654">
    <property type="term" value="P:phospholipid biosynthetic process"/>
    <property type="evidence" value="ECO:0007669"/>
    <property type="project" value="UniProtKB-KW"/>
</dbReference>
<dbReference type="FunFam" id="3.40.50.720:FF:000019">
    <property type="entry name" value="Glycerol-3-phosphate dehydrogenase [NAD(P)+]"/>
    <property type="match status" value="1"/>
</dbReference>
<dbReference type="Gene3D" id="1.10.1040.10">
    <property type="entry name" value="N-(1-d-carboxylethyl)-l-norvaline Dehydrogenase, domain 2"/>
    <property type="match status" value="1"/>
</dbReference>
<dbReference type="Gene3D" id="3.40.50.720">
    <property type="entry name" value="NAD(P)-binding Rossmann-like Domain"/>
    <property type="match status" value="1"/>
</dbReference>
<dbReference type="HAMAP" id="MF_00394">
    <property type="entry name" value="NAD_Glyc3P_dehydrog"/>
    <property type="match status" value="1"/>
</dbReference>
<dbReference type="InterPro" id="IPR008927">
    <property type="entry name" value="6-PGluconate_DH-like_C_sf"/>
</dbReference>
<dbReference type="InterPro" id="IPR013328">
    <property type="entry name" value="6PGD_dom2"/>
</dbReference>
<dbReference type="InterPro" id="IPR006168">
    <property type="entry name" value="G3P_DH_NAD-dep"/>
</dbReference>
<dbReference type="InterPro" id="IPR006109">
    <property type="entry name" value="G3P_DH_NAD-dep_C"/>
</dbReference>
<dbReference type="InterPro" id="IPR011128">
    <property type="entry name" value="G3P_DH_NAD-dep_N"/>
</dbReference>
<dbReference type="InterPro" id="IPR036291">
    <property type="entry name" value="NAD(P)-bd_dom_sf"/>
</dbReference>
<dbReference type="NCBIfam" id="NF000940">
    <property type="entry name" value="PRK00094.1-2"/>
    <property type="match status" value="1"/>
</dbReference>
<dbReference type="NCBIfam" id="NF000942">
    <property type="entry name" value="PRK00094.1-4"/>
    <property type="match status" value="1"/>
</dbReference>
<dbReference type="PANTHER" id="PTHR11728">
    <property type="entry name" value="GLYCEROL-3-PHOSPHATE DEHYDROGENASE"/>
    <property type="match status" value="1"/>
</dbReference>
<dbReference type="PANTHER" id="PTHR11728:SF1">
    <property type="entry name" value="GLYCEROL-3-PHOSPHATE DEHYDROGENASE [NAD(+)] 2, CHLOROPLASTIC"/>
    <property type="match status" value="1"/>
</dbReference>
<dbReference type="Pfam" id="PF07479">
    <property type="entry name" value="NAD_Gly3P_dh_C"/>
    <property type="match status" value="1"/>
</dbReference>
<dbReference type="Pfam" id="PF01210">
    <property type="entry name" value="NAD_Gly3P_dh_N"/>
    <property type="match status" value="1"/>
</dbReference>
<dbReference type="PIRSF" id="PIRSF000114">
    <property type="entry name" value="Glycerol-3-P_dh"/>
    <property type="match status" value="1"/>
</dbReference>
<dbReference type="PRINTS" id="PR00077">
    <property type="entry name" value="GPDHDRGNASE"/>
</dbReference>
<dbReference type="SUPFAM" id="SSF48179">
    <property type="entry name" value="6-phosphogluconate dehydrogenase C-terminal domain-like"/>
    <property type="match status" value="1"/>
</dbReference>
<dbReference type="SUPFAM" id="SSF51735">
    <property type="entry name" value="NAD(P)-binding Rossmann-fold domains"/>
    <property type="match status" value="1"/>
</dbReference>
<dbReference type="PROSITE" id="PS00957">
    <property type="entry name" value="NAD_G3PDH"/>
    <property type="match status" value="1"/>
</dbReference>
<keyword id="KW-0963">Cytoplasm</keyword>
<keyword id="KW-0444">Lipid biosynthesis</keyword>
<keyword id="KW-0443">Lipid metabolism</keyword>
<keyword id="KW-0520">NAD</keyword>
<keyword id="KW-0521">NADP</keyword>
<keyword id="KW-0547">Nucleotide-binding</keyword>
<keyword id="KW-0560">Oxidoreductase</keyword>
<keyword id="KW-0594">Phospholipid biosynthesis</keyword>
<keyword id="KW-1208">Phospholipid metabolism</keyword>
<gene>
    <name evidence="1" type="primary">gpsA</name>
    <name type="ordered locus">amb4006</name>
</gene>
<name>GPDA_PARM1</name>